<protein>
    <recommendedName>
        <fullName>Peroxisomal hydratase-dehydrogenase-epimerase</fullName>
        <shortName>HDE</shortName>
    </recommendedName>
    <alternativeName>
        <fullName>Multifunctional beta-oxidation protein</fullName>
        <shortName>MFP</shortName>
    </alternativeName>
    <domain>
        <recommendedName>
            <fullName>2-enoyl-CoA hydratase</fullName>
            <ecNumber>4.2.1.119</ecNumber>
        </recommendedName>
    </domain>
    <domain>
        <recommendedName>
            <fullName>(3R)-3-hydroxyacyl-CoA dehydrogenase</fullName>
            <ecNumber>1.1.1.n12</ecNumber>
        </recommendedName>
    </domain>
</protein>
<dbReference type="EC" id="4.2.1.119"/>
<dbReference type="EC" id="1.1.1.n12"/>
<dbReference type="EMBL" id="M86456">
    <property type="protein sequence ID" value="AAA34779.1"/>
    <property type="molecule type" value="mRNA"/>
</dbReference>
<dbReference type="EMBL" id="X65124">
    <property type="protein sequence ID" value="CAA46243.1"/>
    <property type="molecule type" value="Genomic_DNA"/>
</dbReference>
<dbReference type="EMBL" id="Z28234">
    <property type="protein sequence ID" value="CAA82079.1"/>
    <property type="molecule type" value="Genomic_DNA"/>
</dbReference>
<dbReference type="EMBL" id="BK006944">
    <property type="protein sequence ID" value="DAA09165.1"/>
    <property type="molecule type" value="Genomic_DNA"/>
</dbReference>
<dbReference type="PIR" id="S25322">
    <property type="entry name" value="S25322"/>
</dbReference>
<dbReference type="RefSeq" id="NP_012934.1">
    <property type="nucleotide sequence ID" value="NM_001179799.1"/>
</dbReference>
<dbReference type="SMR" id="Q02207"/>
<dbReference type="BioGRID" id="34141">
    <property type="interactions" value="72"/>
</dbReference>
<dbReference type="FunCoup" id="Q02207">
    <property type="interactions" value="370"/>
</dbReference>
<dbReference type="IntAct" id="Q02207">
    <property type="interactions" value="2"/>
</dbReference>
<dbReference type="MINT" id="Q02207"/>
<dbReference type="STRING" id="4932.YKR009C"/>
<dbReference type="PaxDb" id="4932-YKR009C"/>
<dbReference type="PeptideAtlas" id="Q02207"/>
<dbReference type="EnsemblFungi" id="YKR009C_mRNA">
    <property type="protein sequence ID" value="YKR009C"/>
    <property type="gene ID" value="YKR009C"/>
</dbReference>
<dbReference type="GeneID" id="853878"/>
<dbReference type="KEGG" id="sce:YKR009C"/>
<dbReference type="AGR" id="SGD:S000001717"/>
<dbReference type="SGD" id="S000001717">
    <property type="gene designation" value="FOX2"/>
</dbReference>
<dbReference type="VEuPathDB" id="FungiDB:YKR009C"/>
<dbReference type="eggNOG" id="KOG1206">
    <property type="taxonomic scope" value="Eukaryota"/>
</dbReference>
<dbReference type="GeneTree" id="ENSGT00940000158343"/>
<dbReference type="HOGENOM" id="CLU_010194_18_0_1"/>
<dbReference type="InParanoid" id="Q02207"/>
<dbReference type="OMA" id="GKTRWQR"/>
<dbReference type="OrthoDB" id="3592703at2759"/>
<dbReference type="BioCyc" id="MetaCyc:YKR009C-MONOMER"/>
<dbReference type="BioCyc" id="YEAST:YKR009C-MONOMER"/>
<dbReference type="BRENDA" id="4.2.1.119">
    <property type="organism ID" value="984"/>
</dbReference>
<dbReference type="UniPathway" id="UPA00659"/>
<dbReference type="BioGRID-ORCS" id="853878">
    <property type="hits" value="1 hit in 10 CRISPR screens"/>
</dbReference>
<dbReference type="PRO" id="PR:Q02207"/>
<dbReference type="Proteomes" id="UP000002311">
    <property type="component" value="Chromosome XI"/>
</dbReference>
<dbReference type="RNAct" id="Q02207">
    <property type="molecule type" value="protein"/>
</dbReference>
<dbReference type="GO" id="GO:0005777">
    <property type="term" value="C:peroxisome"/>
    <property type="evidence" value="ECO:0000314"/>
    <property type="project" value="SGD"/>
</dbReference>
<dbReference type="GO" id="GO:0106386">
    <property type="term" value="F:(3R)-hydroxyacyl-CoA dehydrogenase (NAD+) activity"/>
    <property type="evidence" value="ECO:0007669"/>
    <property type="project" value="RHEA"/>
</dbReference>
<dbReference type="GO" id="GO:0003857">
    <property type="term" value="F:3-hydroxyacyl-CoA dehydrogenase activity"/>
    <property type="evidence" value="ECO:0000314"/>
    <property type="project" value="SGD"/>
</dbReference>
<dbReference type="GO" id="GO:0004300">
    <property type="term" value="F:enoyl-CoA hydratase activity"/>
    <property type="evidence" value="ECO:0000314"/>
    <property type="project" value="SGD"/>
</dbReference>
<dbReference type="GO" id="GO:0016853">
    <property type="term" value="F:isomerase activity"/>
    <property type="evidence" value="ECO:0007669"/>
    <property type="project" value="UniProtKB-KW"/>
</dbReference>
<dbReference type="GO" id="GO:0006635">
    <property type="term" value="P:fatty acid beta-oxidation"/>
    <property type="evidence" value="ECO:0000315"/>
    <property type="project" value="SGD"/>
</dbReference>
<dbReference type="CDD" id="cd03448">
    <property type="entry name" value="HDE_HSD"/>
    <property type="match status" value="1"/>
</dbReference>
<dbReference type="CDD" id="cd05353">
    <property type="entry name" value="hydroxyacyl-CoA-like_DH_SDR_c-like"/>
    <property type="match status" value="1"/>
</dbReference>
<dbReference type="FunFam" id="3.40.50.720:FF:000410">
    <property type="entry name" value="Peroxisomal multifunctional beta-oxidation protein"/>
    <property type="match status" value="1"/>
</dbReference>
<dbReference type="FunFam" id="3.40.50.720:FF:000185">
    <property type="entry name" value="peroxisomal multifunctional enzyme type 2"/>
    <property type="match status" value="1"/>
</dbReference>
<dbReference type="Gene3D" id="3.10.129.10">
    <property type="entry name" value="Hotdog Thioesterase"/>
    <property type="match status" value="2"/>
</dbReference>
<dbReference type="Gene3D" id="3.40.50.720">
    <property type="entry name" value="NAD(P)-binding Rossmann-like Domain"/>
    <property type="match status" value="2"/>
</dbReference>
<dbReference type="InterPro" id="IPR029069">
    <property type="entry name" value="HotDog_dom_sf"/>
</dbReference>
<dbReference type="InterPro" id="IPR002539">
    <property type="entry name" value="MaoC-like_dom"/>
</dbReference>
<dbReference type="InterPro" id="IPR054357">
    <property type="entry name" value="MFE-2_N"/>
</dbReference>
<dbReference type="InterPro" id="IPR036291">
    <property type="entry name" value="NAD(P)-bd_dom_sf"/>
</dbReference>
<dbReference type="InterPro" id="IPR051687">
    <property type="entry name" value="Peroxisomal_Beta-Oxidation"/>
</dbReference>
<dbReference type="InterPro" id="IPR020904">
    <property type="entry name" value="Sc_DH/Rdtase_CS"/>
</dbReference>
<dbReference type="InterPro" id="IPR002347">
    <property type="entry name" value="SDR_fam"/>
</dbReference>
<dbReference type="PANTHER" id="PTHR45024">
    <property type="entry name" value="DEHYDROGENASES, SHORT CHAIN"/>
    <property type="match status" value="1"/>
</dbReference>
<dbReference type="PANTHER" id="PTHR45024:SF2">
    <property type="entry name" value="SCP2 DOMAIN-CONTAINING PROTEIN"/>
    <property type="match status" value="1"/>
</dbReference>
<dbReference type="Pfam" id="PF00106">
    <property type="entry name" value="adh_short"/>
    <property type="match status" value="2"/>
</dbReference>
<dbReference type="Pfam" id="PF01575">
    <property type="entry name" value="MaoC_dehydratas"/>
    <property type="match status" value="1"/>
</dbReference>
<dbReference type="Pfam" id="PF22622">
    <property type="entry name" value="MFE-2_hydrat-2_N"/>
    <property type="match status" value="1"/>
</dbReference>
<dbReference type="PRINTS" id="PR00081">
    <property type="entry name" value="GDHRDH"/>
</dbReference>
<dbReference type="PRINTS" id="PR00080">
    <property type="entry name" value="SDRFAMILY"/>
</dbReference>
<dbReference type="SMART" id="SM00822">
    <property type="entry name" value="PKS_KR"/>
    <property type="match status" value="1"/>
</dbReference>
<dbReference type="SUPFAM" id="SSF51735">
    <property type="entry name" value="NAD(P)-binding Rossmann-fold domains"/>
    <property type="match status" value="2"/>
</dbReference>
<dbReference type="SUPFAM" id="SSF54637">
    <property type="entry name" value="Thioesterase/thiol ester dehydrase-isomerase"/>
    <property type="match status" value="2"/>
</dbReference>
<dbReference type="PROSITE" id="PS00061">
    <property type="entry name" value="ADH_SHORT"/>
    <property type="match status" value="2"/>
</dbReference>
<organism>
    <name type="scientific">Saccharomyces cerevisiae (strain ATCC 204508 / S288c)</name>
    <name type="common">Baker's yeast</name>
    <dbReference type="NCBI Taxonomy" id="559292"/>
    <lineage>
        <taxon>Eukaryota</taxon>
        <taxon>Fungi</taxon>
        <taxon>Dikarya</taxon>
        <taxon>Ascomycota</taxon>
        <taxon>Saccharomycotina</taxon>
        <taxon>Saccharomycetes</taxon>
        <taxon>Saccharomycetales</taxon>
        <taxon>Saccharomycetaceae</taxon>
        <taxon>Saccharomyces</taxon>
    </lineage>
</organism>
<sequence>MPGNLSFKDRVVVITGAGGGLGKVYALAYASRGAKVVVNDLGGTLGGSGHNSKAADLVVDEIKKAGGIAVANYDSVNENGEKIIETAIKEFGRVDVLINNAGILRDVSFAKMTEREFASVVDVHLTGGYKLSRAAWPYMRSQKFGRIINTASPAGLFGNFGQANYSAAKMGLVGLAETLAKEGAKYNINVNSIAPLARSRMTENVLPPHILKQLGPEKIVPLVLYLTHESTKVSNSIFELAAGFFGQLRWERSSGQIFNPDPKTYTPEAILNKWKEITDYRDKPFNKTQHPYQLSDYNDLITKAKKLPPNEQGSVKIKSLCNKVVVVTGAGGGLGKSHAIWFARYGAKVVVNDIKDPFSVVEEINKLYGEGTAIPDSHDVVTEAPLIIQTAISKFQRVDILVNNAGILRDKSFLKMKDEEWFAVLKVHLFSTFSLSKAVWPIFTKQKSGFIINTTSTSGIYGNFGQANYAAAKAAILGFSKTIALEGAKRGIIVNVIAPHAETAMTKTIFSEKELSNHFDASQVSPLVVLLASEELQKYSGRRVIGQLFEVGGGWCGQTRWQRSSGYVSIKETIEPEEIKENWNHITDFSRNTINPSSTEESSMATLQAVQKAHSSKELDDGLFKYTTKDCILYNLGLGCTSKELKYTYENDPDFQVLPTFAVIPFMQATATLAMDNLVDNFNYAMLLHGEQYFKLCTPTMPSNGTLKTLAKPLQVLDKNGKAALVVGGFETYDIKTKKLIAYNEGSFFIRGAHVPPEKEVRDGKRAKFAVQNFEVPHGKVPDFEAEISTNKDQAALYRLSGDFNPLHIDPTLAKAVKFPTPILHGLCTLGISAKALFEHYGPYEELKVRFTNVVFPGDTLKVKAWKQGSVVVFQTIDTTRNVIVLDNAAVKLSQAKSKL</sequence>
<proteinExistence type="evidence at transcript level"/>
<feature type="chain" id="PRO_0000054700" description="Peroxisomal hydratase-dehydrogenase-epimerase">
    <location>
        <begin position="1"/>
        <end position="900"/>
    </location>
</feature>
<feature type="domain" description="MaoC-like">
    <location>
        <begin position="775"/>
        <end position="887"/>
    </location>
</feature>
<feature type="region of interest" description="Short-chain dehydrogenase like 1">
    <location>
        <begin position="6"/>
        <end position="230"/>
    </location>
</feature>
<feature type="region of interest" description="Short-chain dehydrogenase like 2">
    <location>
        <begin position="319"/>
        <end position="535"/>
    </location>
</feature>
<feature type="short sequence motif" description="Microbody targeting signal" evidence="5">
    <location>
        <begin position="898"/>
        <end position="900"/>
    </location>
</feature>
<feature type="active site" description="Proton donor" evidence="3">
    <location>
        <position position="165"/>
    </location>
</feature>
<feature type="active site" description="Lowers pKa of active site Tyr" evidence="3">
    <location>
        <position position="169"/>
    </location>
</feature>
<feature type="binding site" evidence="2">
    <location>
        <position position="14"/>
    </location>
    <ligand>
        <name>NADP(+)</name>
        <dbReference type="ChEBI" id="CHEBI:58349"/>
    </ligand>
</feature>
<feature type="binding site" evidence="2">
    <location>
        <position position="53"/>
    </location>
    <ligand>
        <name>NADP(+)</name>
        <dbReference type="ChEBI" id="CHEBI:58349"/>
    </ligand>
</feature>
<feature type="binding site" evidence="3">
    <location>
        <position position="100"/>
    </location>
    <ligand>
        <name>NADP(+)</name>
        <dbReference type="ChEBI" id="CHEBI:58349"/>
    </ligand>
</feature>
<feature type="binding site" evidence="2">
    <location>
        <position position="133"/>
    </location>
    <ligand>
        <name>NADP(+)</name>
        <dbReference type="ChEBI" id="CHEBI:58349"/>
    </ligand>
</feature>
<feature type="binding site" evidence="3">
    <location>
        <position position="165"/>
    </location>
    <ligand>
        <name>NADP(+)</name>
        <dbReference type="ChEBI" id="CHEBI:58349"/>
    </ligand>
</feature>
<feature type="binding site" evidence="3">
    <location>
        <position position="169"/>
    </location>
    <ligand>
        <name>NADP(+)</name>
        <dbReference type="ChEBI" id="CHEBI:58349"/>
    </ligand>
</feature>
<feature type="binding site" evidence="4">
    <location>
        <position position="689"/>
    </location>
    <ligand>
        <name>(3R)-3-hydroxydecanoyl-CoA</name>
        <dbReference type="ChEBI" id="CHEBI:74272"/>
    </ligand>
</feature>
<feature type="binding site" evidence="4">
    <location>
        <position position="690"/>
    </location>
    <ligand>
        <name>(3R)-3-hydroxydecanoyl-CoA</name>
        <dbReference type="ChEBI" id="CHEBI:74272"/>
    </ligand>
</feature>
<feature type="binding site" evidence="4">
    <location>
        <position position="719"/>
    </location>
    <ligand>
        <name>(3R)-3-hydroxydecanoyl-CoA</name>
        <dbReference type="ChEBI" id="CHEBI:74272"/>
    </ligand>
</feature>
<feature type="binding site" evidence="4">
    <location>
        <position position="803"/>
    </location>
    <ligand>
        <name>(3R)-3-hydroxydecanoyl-CoA</name>
        <dbReference type="ChEBI" id="CHEBI:74272"/>
    </ligand>
</feature>
<feature type="binding site" evidence="4">
    <location>
        <position position="805"/>
    </location>
    <ligand>
        <name>(3R)-3-hydroxydecanoyl-CoA</name>
        <dbReference type="ChEBI" id="CHEBI:74272"/>
    </ligand>
</feature>
<feature type="binding site" evidence="4">
    <location>
        <position position="826"/>
    </location>
    <ligand>
        <name>(3R)-3-hydroxydecanoyl-CoA</name>
        <dbReference type="ChEBI" id="CHEBI:74272"/>
    </ligand>
</feature>
<feature type="binding site" evidence="4">
    <location>
        <position position="851"/>
    </location>
    <ligand>
        <name>(3R)-3-hydroxydecanoyl-CoA</name>
        <dbReference type="ChEBI" id="CHEBI:74272"/>
    </ligand>
</feature>
<feature type="binding site" evidence="4">
    <location>
        <position position="852"/>
    </location>
    <ligand>
        <name>(3R)-3-hydroxydecanoyl-CoA</name>
        <dbReference type="ChEBI" id="CHEBI:74272"/>
    </ligand>
</feature>
<name>FOX2_YEAST</name>
<reference key="1">
    <citation type="journal article" date="1992" name="J. Biol. Chem.">
        <title>Peroxisomal multifunctional beta-oxidation protein of Saccharomyces cerevisiae. Molecular analysis of the fox2 gene and gene product.</title>
        <authorList>
            <person name="Hiltunen J.K."/>
            <person name="Wenzel B."/>
            <person name="Beyer A."/>
            <person name="Erdmann R."/>
            <person name="Fossa A."/>
            <person name="Kunau W.H."/>
        </authorList>
    </citation>
    <scope>NUCLEOTIDE SEQUENCE [MRNA]</scope>
</reference>
<reference key="2">
    <citation type="journal article" date="1992" name="Yeast">
        <title>DNA sequencing and analysis of a 24.7 kb segment encompassing centromere CEN11 of Saccharomyces cerevisiae reveals nine previously unknown open reading frames.</title>
        <authorList>
            <person name="Duesterhoeft A."/>
            <person name="Philippsen P."/>
        </authorList>
    </citation>
    <scope>NUCLEOTIDE SEQUENCE [GENOMIC DNA]</scope>
    <source>
        <strain>ATCC 204508 / S288c</strain>
    </source>
</reference>
<reference key="3">
    <citation type="journal article" date="1994" name="Nature">
        <title>Complete DNA sequence of yeast chromosome XI.</title>
        <authorList>
            <person name="Dujon B."/>
            <person name="Alexandraki D."/>
            <person name="Andre B."/>
            <person name="Ansorge W."/>
            <person name="Baladron V."/>
            <person name="Ballesta J.P.G."/>
            <person name="Banrevi A."/>
            <person name="Bolle P.-A."/>
            <person name="Bolotin-Fukuhara M."/>
            <person name="Bossier P."/>
            <person name="Bou G."/>
            <person name="Boyer J."/>
            <person name="Buitrago M.J."/>
            <person name="Cheret G."/>
            <person name="Colleaux L."/>
            <person name="Daignan-Fornier B."/>
            <person name="del Rey F."/>
            <person name="Dion C."/>
            <person name="Domdey H."/>
            <person name="Duesterhoeft A."/>
            <person name="Duesterhus S."/>
            <person name="Entian K.-D."/>
            <person name="Erfle H."/>
            <person name="Esteban P.F."/>
            <person name="Feldmann H."/>
            <person name="Fernandes L."/>
            <person name="Fobo G.M."/>
            <person name="Fritz C."/>
            <person name="Fukuhara H."/>
            <person name="Gabel C."/>
            <person name="Gaillon L."/>
            <person name="Garcia-Cantalejo J.M."/>
            <person name="Garcia-Ramirez J.J."/>
            <person name="Gent M.E."/>
            <person name="Ghazvini M."/>
            <person name="Goffeau A."/>
            <person name="Gonzalez A."/>
            <person name="Grothues D."/>
            <person name="Guerreiro P."/>
            <person name="Hegemann J.H."/>
            <person name="Hewitt N."/>
            <person name="Hilger F."/>
            <person name="Hollenberg C.P."/>
            <person name="Horaitis O."/>
            <person name="Indge K.J."/>
            <person name="Jacquier A."/>
            <person name="James C.M."/>
            <person name="Jauniaux J.-C."/>
            <person name="Jimenez A."/>
            <person name="Keuchel H."/>
            <person name="Kirchrath L."/>
            <person name="Kleine K."/>
            <person name="Koetter P."/>
            <person name="Legrain P."/>
            <person name="Liebl S."/>
            <person name="Louis E.J."/>
            <person name="Maia e Silva A."/>
            <person name="Marck C."/>
            <person name="Monnier A.-L."/>
            <person name="Moestl D."/>
            <person name="Mueller S."/>
            <person name="Obermaier B."/>
            <person name="Oliver S.G."/>
            <person name="Pallier C."/>
            <person name="Pascolo S."/>
            <person name="Pfeiffer F."/>
            <person name="Philippsen P."/>
            <person name="Planta R.J."/>
            <person name="Pohl F.M."/>
            <person name="Pohl T.M."/>
            <person name="Poehlmann R."/>
            <person name="Portetelle D."/>
            <person name="Purnelle B."/>
            <person name="Puzos V."/>
            <person name="Ramezani Rad M."/>
            <person name="Rasmussen S.W."/>
            <person name="Remacha M.A."/>
            <person name="Revuelta J.L."/>
            <person name="Richard G.-F."/>
            <person name="Rieger M."/>
            <person name="Rodrigues-Pousada C."/>
            <person name="Rose M."/>
            <person name="Rupp T."/>
            <person name="Santos M.A."/>
            <person name="Schwager C."/>
            <person name="Sensen C."/>
            <person name="Skala J."/>
            <person name="Soares H."/>
            <person name="Sor F."/>
            <person name="Stegemann J."/>
            <person name="Tettelin H."/>
            <person name="Thierry A."/>
            <person name="Tzermia M."/>
            <person name="Urrestarazu L.A."/>
            <person name="van Dyck L."/>
            <person name="van Vliet-Reedijk J.C."/>
            <person name="Valens M."/>
            <person name="Vandenbol M."/>
            <person name="Vilela C."/>
            <person name="Vissers S."/>
            <person name="von Wettstein D."/>
            <person name="Voss H."/>
            <person name="Wiemann S."/>
            <person name="Xu G."/>
            <person name="Zimmermann J."/>
            <person name="Haasemann M."/>
            <person name="Becker I."/>
            <person name="Mewes H.-W."/>
        </authorList>
    </citation>
    <scope>NUCLEOTIDE SEQUENCE [LARGE SCALE GENOMIC DNA]</scope>
    <source>
        <strain>ATCC 204508 / S288c</strain>
    </source>
</reference>
<reference key="4">
    <citation type="journal article" date="2014" name="G3 (Bethesda)">
        <title>The reference genome sequence of Saccharomyces cerevisiae: Then and now.</title>
        <authorList>
            <person name="Engel S.R."/>
            <person name="Dietrich F.S."/>
            <person name="Fisk D.G."/>
            <person name="Binkley G."/>
            <person name="Balakrishnan R."/>
            <person name="Costanzo M.C."/>
            <person name="Dwight S.S."/>
            <person name="Hitz B.C."/>
            <person name="Karra K."/>
            <person name="Nash R.S."/>
            <person name="Weng S."/>
            <person name="Wong E.D."/>
            <person name="Lloyd P."/>
            <person name="Skrzypek M.S."/>
            <person name="Miyasato S.R."/>
            <person name="Simison M."/>
            <person name="Cherry J.M."/>
        </authorList>
    </citation>
    <scope>GENOME REANNOTATION</scope>
    <source>
        <strain>ATCC 204508 / S288c</strain>
    </source>
</reference>
<accession>Q02207</accession>
<accession>D6VX75</accession>
<gene>
    <name type="primary">FOX2</name>
    <name type="ordered locus">YKR009C</name>
    <name type="ORF">YK108</name>
</gene>
<comment type="function">
    <text>Second trifunctional enzyme acting on the beta-oxidation pathway for fatty acids, possessing hydratase-dehydrogenase-epimerase activities. Converts trans-2-enoyl-CoA via D-3-hydroxyacyl-CoA to 3-ketoacyl-CoA.</text>
</comment>
<comment type="catalytic activity">
    <reaction>
        <text>a (3R)-3-hydroxyacyl-CoA = a (2E)-enoyl-CoA + H2O</text>
        <dbReference type="Rhea" id="RHEA:26526"/>
        <dbReference type="ChEBI" id="CHEBI:15377"/>
        <dbReference type="ChEBI" id="CHEBI:57319"/>
        <dbReference type="ChEBI" id="CHEBI:58856"/>
        <dbReference type="EC" id="4.2.1.119"/>
    </reaction>
</comment>
<comment type="catalytic activity">
    <reaction>
        <text>a (3R)-3-hydroxyacyl-CoA + NAD(+) = a 3-oxoacyl-CoA + NADH + H(+)</text>
        <dbReference type="Rhea" id="RHEA:32711"/>
        <dbReference type="ChEBI" id="CHEBI:15378"/>
        <dbReference type="ChEBI" id="CHEBI:57319"/>
        <dbReference type="ChEBI" id="CHEBI:57540"/>
        <dbReference type="ChEBI" id="CHEBI:57945"/>
        <dbReference type="ChEBI" id="CHEBI:90726"/>
        <dbReference type="EC" id="1.1.1.n12"/>
    </reaction>
</comment>
<comment type="pathway">
    <text>Lipid metabolism; fatty acid beta-oxidation.</text>
</comment>
<comment type="subunit">
    <text evidence="1">Monomer.</text>
</comment>
<comment type="subcellular location">
    <subcellularLocation>
        <location>Peroxisome</location>
    </subcellularLocation>
</comment>
<comment type="domain">
    <text>Contains two SDR domains.</text>
</comment>
<comment type="similarity">
    <text evidence="6">Belongs to the short-chain dehydrogenases/reductases (SDR) family.</text>
</comment>
<evidence type="ECO:0000250" key="1"/>
<evidence type="ECO:0000250" key="2">
    <source>
        <dbReference type="UniProtKB" id="L0E2Z4"/>
    </source>
</evidence>
<evidence type="ECO:0000250" key="3">
    <source>
        <dbReference type="UniProtKB" id="O93868"/>
    </source>
</evidence>
<evidence type="ECO:0000250" key="4">
    <source>
        <dbReference type="UniProtKB" id="P22414"/>
    </source>
</evidence>
<evidence type="ECO:0000255" key="5"/>
<evidence type="ECO:0000305" key="6"/>
<keyword id="KW-0276">Fatty acid metabolism</keyword>
<keyword id="KW-0413">Isomerase</keyword>
<keyword id="KW-0443">Lipid metabolism</keyword>
<keyword id="KW-0456">Lyase</keyword>
<keyword id="KW-0511">Multifunctional enzyme</keyword>
<keyword id="KW-0520">NAD</keyword>
<keyword id="KW-0521">NADP</keyword>
<keyword id="KW-0560">Oxidoreductase</keyword>
<keyword id="KW-0576">Peroxisome</keyword>
<keyword id="KW-1185">Reference proteome</keyword>
<keyword id="KW-0677">Repeat</keyword>